<sequence>MASNVTDKSFEEEVLKSDLPVLVDFWAEWCSPCRMLTPIIEEISKDLESKVKVLKMNIDENPEIPSKYGIRSIPTVMLFKNGEQKDTKVGLHQKNSLIEWINNNI</sequence>
<feature type="chain" id="PRO_0000272626" description="Thioredoxin">
    <location>
        <begin position="1"/>
        <end position="105"/>
    </location>
</feature>
<feature type="domain" description="Thioredoxin" evidence="2">
    <location>
        <begin position="1"/>
        <end position="105"/>
    </location>
</feature>
<feature type="disulfide bond" description="Redox-active" evidence="2">
    <location>
        <begin position="30"/>
        <end position="33"/>
    </location>
</feature>
<gene>
    <name type="primary">trxA</name>
    <name type="ordered locus">RBE_0002</name>
</gene>
<evidence type="ECO:0000250" key="1"/>
<evidence type="ECO:0000255" key="2">
    <source>
        <dbReference type="PROSITE-ProRule" id="PRU00691"/>
    </source>
</evidence>
<evidence type="ECO:0000305" key="3"/>
<comment type="function">
    <text evidence="1">Component of the thioredoxin-thioredoxin reductase system. Participates in various redox reactions through the reversible oxidation of its active center dithiol to a disulfide and catalyzes dithiol-disulfide exchange reactions (By similarity).</text>
</comment>
<comment type="similarity">
    <text evidence="3">Belongs to the thioredoxin family.</text>
</comment>
<comment type="sequence caution" evidence="3">
    <conflict type="erroneous initiation">
        <sequence resource="EMBL-CDS" id="ABE04083"/>
    </conflict>
</comment>
<reference key="1">
    <citation type="journal article" date="2006" name="PLoS Genet.">
        <title>Genome sequence of Rickettsia bellii illuminates the role of amoebae in gene exchanges between intracellular pathogens.</title>
        <authorList>
            <person name="Ogata H."/>
            <person name="La Scola B."/>
            <person name="Audic S."/>
            <person name="Renesto P."/>
            <person name="Blanc G."/>
            <person name="Robert C."/>
            <person name="Fournier P.-E."/>
            <person name="Claverie J.-M."/>
            <person name="Raoult D."/>
        </authorList>
    </citation>
    <scope>NUCLEOTIDE SEQUENCE [LARGE SCALE GENOMIC DNA]</scope>
    <source>
        <strain>RML369-C</strain>
    </source>
</reference>
<dbReference type="EMBL" id="CP000087">
    <property type="protein sequence ID" value="ABE04083.1"/>
    <property type="status" value="ALT_INIT"/>
    <property type="molecule type" value="Genomic_DNA"/>
</dbReference>
<dbReference type="RefSeq" id="WP_041804577.1">
    <property type="nucleotide sequence ID" value="NC_007940.1"/>
</dbReference>
<dbReference type="SMR" id="Q1RKN1"/>
<dbReference type="KEGG" id="rbe:RBE_0002"/>
<dbReference type="eggNOG" id="COG3118">
    <property type="taxonomic scope" value="Bacteria"/>
</dbReference>
<dbReference type="HOGENOM" id="CLU_090389_10_2_5"/>
<dbReference type="OrthoDB" id="9790390at2"/>
<dbReference type="Proteomes" id="UP000001951">
    <property type="component" value="Chromosome"/>
</dbReference>
<dbReference type="GO" id="GO:0005737">
    <property type="term" value="C:cytoplasm"/>
    <property type="evidence" value="ECO:0007669"/>
    <property type="project" value="TreeGrafter"/>
</dbReference>
<dbReference type="GO" id="GO:0015035">
    <property type="term" value="F:protein-disulfide reductase activity"/>
    <property type="evidence" value="ECO:0007669"/>
    <property type="project" value="InterPro"/>
</dbReference>
<dbReference type="CDD" id="cd02947">
    <property type="entry name" value="TRX_family"/>
    <property type="match status" value="1"/>
</dbReference>
<dbReference type="FunFam" id="3.40.30.10:FF:000001">
    <property type="entry name" value="Thioredoxin"/>
    <property type="match status" value="1"/>
</dbReference>
<dbReference type="Gene3D" id="3.40.30.10">
    <property type="entry name" value="Glutaredoxin"/>
    <property type="match status" value="1"/>
</dbReference>
<dbReference type="InterPro" id="IPR005746">
    <property type="entry name" value="Thioredoxin"/>
</dbReference>
<dbReference type="InterPro" id="IPR036249">
    <property type="entry name" value="Thioredoxin-like_sf"/>
</dbReference>
<dbReference type="InterPro" id="IPR013766">
    <property type="entry name" value="Thioredoxin_domain"/>
</dbReference>
<dbReference type="NCBIfam" id="TIGR01068">
    <property type="entry name" value="thioredoxin"/>
    <property type="match status" value="1"/>
</dbReference>
<dbReference type="PANTHER" id="PTHR45663">
    <property type="entry name" value="GEO12009P1"/>
    <property type="match status" value="1"/>
</dbReference>
<dbReference type="PANTHER" id="PTHR45663:SF11">
    <property type="entry name" value="GEO12009P1"/>
    <property type="match status" value="1"/>
</dbReference>
<dbReference type="Pfam" id="PF00085">
    <property type="entry name" value="Thioredoxin"/>
    <property type="match status" value="1"/>
</dbReference>
<dbReference type="PIRSF" id="PIRSF000077">
    <property type="entry name" value="Thioredoxin"/>
    <property type="match status" value="1"/>
</dbReference>
<dbReference type="PRINTS" id="PR00421">
    <property type="entry name" value="THIOREDOXIN"/>
</dbReference>
<dbReference type="SUPFAM" id="SSF52833">
    <property type="entry name" value="Thioredoxin-like"/>
    <property type="match status" value="1"/>
</dbReference>
<dbReference type="PROSITE" id="PS51352">
    <property type="entry name" value="THIOREDOXIN_2"/>
    <property type="match status" value="1"/>
</dbReference>
<organism>
    <name type="scientific">Rickettsia bellii (strain RML369-C)</name>
    <dbReference type="NCBI Taxonomy" id="336407"/>
    <lineage>
        <taxon>Bacteria</taxon>
        <taxon>Pseudomonadati</taxon>
        <taxon>Pseudomonadota</taxon>
        <taxon>Alphaproteobacteria</taxon>
        <taxon>Rickettsiales</taxon>
        <taxon>Rickettsiaceae</taxon>
        <taxon>Rickettsieae</taxon>
        <taxon>Rickettsia</taxon>
        <taxon>belli group</taxon>
    </lineage>
</organism>
<keyword id="KW-1015">Disulfide bond</keyword>
<keyword id="KW-0249">Electron transport</keyword>
<keyword id="KW-0676">Redox-active center</keyword>
<keyword id="KW-0813">Transport</keyword>
<protein>
    <recommendedName>
        <fullName>Thioredoxin</fullName>
        <shortName>Trx</shortName>
    </recommendedName>
</protein>
<accession>Q1RKN1</accession>
<name>THIO_RICBR</name>
<proteinExistence type="inferred from homology"/>